<organism>
    <name type="scientific">Oryctolagus cuniculus</name>
    <name type="common">Rabbit</name>
    <dbReference type="NCBI Taxonomy" id="9986"/>
    <lineage>
        <taxon>Eukaryota</taxon>
        <taxon>Metazoa</taxon>
        <taxon>Chordata</taxon>
        <taxon>Craniata</taxon>
        <taxon>Vertebrata</taxon>
        <taxon>Euteleostomi</taxon>
        <taxon>Mammalia</taxon>
        <taxon>Eutheria</taxon>
        <taxon>Euarchontoglires</taxon>
        <taxon>Glires</taxon>
        <taxon>Lagomorpha</taxon>
        <taxon>Leporidae</taxon>
        <taxon>Oryctolagus</taxon>
    </lineage>
</organism>
<keyword id="KW-1003">Cell membrane</keyword>
<keyword id="KW-1015">Disulfide bond</keyword>
<keyword id="KW-0297">G-protein coupled receptor</keyword>
<keyword id="KW-0325">Glycoprotein</keyword>
<keyword id="KW-0449">Lipoprotein</keyword>
<keyword id="KW-0472">Membrane</keyword>
<keyword id="KW-0564">Palmitate</keyword>
<keyword id="KW-0675">Receptor</keyword>
<keyword id="KW-1185">Reference proteome</keyword>
<keyword id="KW-0807">Transducer</keyword>
<keyword id="KW-0812">Transmembrane</keyword>
<keyword id="KW-1133">Transmembrane helix</keyword>
<name>NK3R_RABIT</name>
<protein>
    <recommendedName>
        <fullName>Neuromedin-K receptor</fullName>
        <shortName>NKR</shortName>
    </recommendedName>
    <alternativeName>
        <fullName>NK-3 receptor</fullName>
        <shortName>NK-3R</shortName>
    </alternativeName>
    <alternativeName>
        <fullName>Neurokinin B receptor</fullName>
    </alternativeName>
    <alternativeName>
        <fullName>Tachykinin receptor 3</fullName>
    </alternativeName>
</protein>
<evidence type="ECO:0000250" key="1"/>
<evidence type="ECO:0000255" key="2"/>
<evidence type="ECO:0000255" key="3">
    <source>
        <dbReference type="PROSITE-ProRule" id="PRU00521"/>
    </source>
</evidence>
<evidence type="ECO:0000256" key="4">
    <source>
        <dbReference type="SAM" id="MobiDB-lite"/>
    </source>
</evidence>
<reference key="1">
    <citation type="journal article" date="1999" name="Br. J. Pharmacol.">
        <title>Molecular and pharmacological characterization of a functional tachykinin NK3 receptor cloned from the rabbit iris sphincter muscle.</title>
        <authorList>
            <person name="Medhurst A.D."/>
            <person name="Hirst W.D."/>
            <person name="Jerman J.C."/>
            <person name="Meakin J."/>
            <person name="Roberts J.C."/>
            <person name="Testa T."/>
            <person name="Smart D."/>
        </authorList>
    </citation>
    <scope>NUCLEOTIDE SEQUENCE [MRNA]</scope>
    <source>
        <strain>New Zealand white</strain>
        <tissue>Iris sphincter muscle</tissue>
    </source>
</reference>
<accession>O97512</accession>
<feature type="chain" id="PRO_0000069901" description="Neuromedin-K receptor">
    <location>
        <begin position="1"/>
        <end position="467"/>
    </location>
</feature>
<feature type="topological domain" description="Extracellular" evidence="2">
    <location>
        <begin position="1"/>
        <end position="86"/>
    </location>
</feature>
<feature type="transmembrane region" description="Helical; Name=1" evidence="2">
    <location>
        <begin position="87"/>
        <end position="109"/>
    </location>
</feature>
<feature type="topological domain" description="Cytoplasmic" evidence="2">
    <location>
        <begin position="110"/>
        <end position="119"/>
    </location>
</feature>
<feature type="transmembrane region" description="Helical; Name=2" evidence="2">
    <location>
        <begin position="120"/>
        <end position="141"/>
    </location>
</feature>
<feature type="topological domain" description="Extracellular" evidence="2">
    <location>
        <begin position="142"/>
        <end position="161"/>
    </location>
</feature>
<feature type="transmembrane region" description="Helical; Name=3" evidence="2">
    <location>
        <begin position="162"/>
        <end position="183"/>
    </location>
</feature>
<feature type="topological domain" description="Cytoplasmic" evidence="2">
    <location>
        <begin position="184"/>
        <end position="203"/>
    </location>
</feature>
<feature type="transmembrane region" description="Helical; Name=4" evidence="2">
    <location>
        <begin position="204"/>
        <end position="224"/>
    </location>
</feature>
<feature type="topological domain" description="Extracellular" evidence="2">
    <location>
        <begin position="225"/>
        <end position="247"/>
    </location>
</feature>
<feature type="transmembrane region" description="Helical; Name=5" evidence="2">
    <location>
        <begin position="248"/>
        <end position="272"/>
    </location>
</feature>
<feature type="topological domain" description="Cytoplasmic" evidence="2">
    <location>
        <begin position="273"/>
        <end position="301"/>
    </location>
</feature>
<feature type="transmembrane region" description="Helical; Name=6" evidence="2">
    <location>
        <begin position="302"/>
        <end position="323"/>
    </location>
</feature>
<feature type="topological domain" description="Extracellular" evidence="2">
    <location>
        <begin position="324"/>
        <end position="336"/>
    </location>
</feature>
<feature type="transmembrane region" description="Helical; Name=7" evidence="2">
    <location>
        <begin position="337"/>
        <end position="361"/>
    </location>
</feature>
<feature type="topological domain" description="Cytoplasmic" evidence="2">
    <location>
        <begin position="362"/>
        <end position="467"/>
    </location>
</feature>
<feature type="region of interest" description="Disordered" evidence="4">
    <location>
        <begin position="416"/>
        <end position="467"/>
    </location>
</feature>
<feature type="compositionally biased region" description="Low complexity" evidence="4">
    <location>
        <begin position="447"/>
        <end position="467"/>
    </location>
</feature>
<feature type="lipid moiety-binding region" description="S-palmitoyl cysteine" evidence="2">
    <location>
        <position position="376"/>
    </location>
</feature>
<feature type="glycosylation site" description="N-linked (GlcNAc...) asparagine" evidence="2">
    <location>
        <position position="23"/>
    </location>
</feature>
<feature type="glycosylation site" description="N-linked (GlcNAc...) asparagine" evidence="2">
    <location>
        <position position="50"/>
    </location>
</feature>
<feature type="glycosylation site" description="N-linked (GlcNAc...) asparagine" evidence="2">
    <location>
        <position position="75"/>
    </location>
</feature>
<feature type="disulfide bond" evidence="3">
    <location>
        <begin position="160"/>
        <end position="235"/>
    </location>
</feature>
<gene>
    <name type="primary">TACR3</name>
</gene>
<dbReference type="EMBL" id="AF133908">
    <property type="protein sequence ID" value="AAD01408.2"/>
    <property type="molecule type" value="mRNA"/>
</dbReference>
<dbReference type="RefSeq" id="NP_001075524.1">
    <property type="nucleotide sequence ID" value="NM_001082055.1"/>
</dbReference>
<dbReference type="SMR" id="O97512"/>
<dbReference type="FunCoup" id="O97512">
    <property type="interactions" value="94"/>
</dbReference>
<dbReference type="STRING" id="9986.ENSOCUP00000008258"/>
<dbReference type="GlyCosmos" id="O97512">
    <property type="glycosylation" value="3 sites, No reported glycans"/>
</dbReference>
<dbReference type="PaxDb" id="9986-ENSOCUP00000008258"/>
<dbReference type="GeneID" id="100008721"/>
<dbReference type="KEGG" id="ocu:100008721"/>
<dbReference type="CTD" id="6870"/>
<dbReference type="eggNOG" id="KOG4219">
    <property type="taxonomic scope" value="Eukaryota"/>
</dbReference>
<dbReference type="InParanoid" id="O97512"/>
<dbReference type="OrthoDB" id="5981855at2759"/>
<dbReference type="Proteomes" id="UP000001811">
    <property type="component" value="Unplaced"/>
</dbReference>
<dbReference type="GO" id="GO:0005886">
    <property type="term" value="C:plasma membrane"/>
    <property type="evidence" value="ECO:0007669"/>
    <property type="project" value="UniProtKB-SubCell"/>
</dbReference>
<dbReference type="GO" id="GO:0097225">
    <property type="term" value="C:sperm midpiece"/>
    <property type="evidence" value="ECO:0007669"/>
    <property type="project" value="TreeGrafter"/>
</dbReference>
<dbReference type="GO" id="GO:0004995">
    <property type="term" value="F:tachykinin receptor activity"/>
    <property type="evidence" value="ECO:0007669"/>
    <property type="project" value="InterPro"/>
</dbReference>
<dbReference type="GO" id="GO:1902093">
    <property type="term" value="P:positive regulation of flagellated sperm motility"/>
    <property type="evidence" value="ECO:0007669"/>
    <property type="project" value="TreeGrafter"/>
</dbReference>
<dbReference type="CDD" id="cd16003">
    <property type="entry name" value="7tmA_NKR_NK3R"/>
    <property type="match status" value="1"/>
</dbReference>
<dbReference type="FunFam" id="1.20.1070.10:FF:000078">
    <property type="entry name" value="Neuromedin-K receptor"/>
    <property type="match status" value="1"/>
</dbReference>
<dbReference type="Gene3D" id="1.20.1070.10">
    <property type="entry name" value="Rhodopsin 7-helix transmembrane proteins"/>
    <property type="match status" value="1"/>
</dbReference>
<dbReference type="InterPro" id="IPR000276">
    <property type="entry name" value="GPCR_Rhodpsn"/>
</dbReference>
<dbReference type="InterPro" id="IPR017452">
    <property type="entry name" value="GPCR_Rhodpsn_7TM"/>
</dbReference>
<dbReference type="InterPro" id="IPR001681">
    <property type="entry name" value="Neurokn_rcpt"/>
</dbReference>
<dbReference type="InterPro" id="IPR001013">
    <property type="entry name" value="NK3_rcpt"/>
</dbReference>
<dbReference type="PANTHER" id="PTHR46925">
    <property type="entry name" value="G-PROTEIN COUPLED RECEPTOR TKR-1-RELATED"/>
    <property type="match status" value="1"/>
</dbReference>
<dbReference type="PANTHER" id="PTHR46925:SF1">
    <property type="entry name" value="NEUROMEDIN-K RECEPTOR"/>
    <property type="match status" value="1"/>
</dbReference>
<dbReference type="Pfam" id="PF00001">
    <property type="entry name" value="7tm_1"/>
    <property type="match status" value="1"/>
</dbReference>
<dbReference type="PRINTS" id="PR00237">
    <property type="entry name" value="GPCRRHODOPSN"/>
</dbReference>
<dbReference type="PRINTS" id="PR01026">
    <property type="entry name" value="NEUROKININ3R"/>
</dbReference>
<dbReference type="PRINTS" id="PR00244">
    <property type="entry name" value="NEUROKININR"/>
</dbReference>
<dbReference type="SMART" id="SM01381">
    <property type="entry name" value="7TM_GPCR_Srsx"/>
    <property type="match status" value="1"/>
</dbReference>
<dbReference type="SUPFAM" id="SSF81321">
    <property type="entry name" value="Family A G protein-coupled receptor-like"/>
    <property type="match status" value="1"/>
</dbReference>
<dbReference type="PROSITE" id="PS00237">
    <property type="entry name" value="G_PROTEIN_RECEP_F1_1"/>
    <property type="match status" value="1"/>
</dbReference>
<dbReference type="PROSITE" id="PS50262">
    <property type="entry name" value="G_PROTEIN_RECEP_F1_2"/>
    <property type="match status" value="1"/>
</dbReference>
<proteinExistence type="evidence at transcript level"/>
<sequence>MDSFAAAETWTDAAGGAGADGRNLSAALAAGAAAEALGTEWLQLLVQAGNLSSSLPSSVPGLPTTSPAPSQPRANLTNQFVQPSWRIALWSLAYGVVVAVAVFGNLIVIWIILAHKRMRTVTNYFLVNLAFSDASMAAFNTLVNFIYALHSEWYFGANYCRFQNFFPITAVFASIYSMTAIAVDRYMAIIDPLKPRLSATATKIVIGSIWILAFLLALPQCLYSKTKVMPGRTLCYVQWPEGPKQHFIYHIIVIILVYCFPLLIMGITYTIVGITLWGGEIPGDTCDKYHEQLKAKRKVVKMMIIVVVTFAICWLPYHIYFILTAIYQQLNRWKYIQQVYLASFWLAMSSTMYNPIIYCCLNKRFRAGFKRAFRWCPFIQVSSYDELELKTTRFHPTRQSSLYTVTRMESMTVVFDPSDADNTRSSRKKRATPGDPNFNGCSRRNSKSASTTSSFISSPYTSMEEYS</sequence>
<comment type="function">
    <text evidence="1">This is a receptor for the tachykinin neuropeptide neuromedin-K (neurokinin B). It is associated with G proteins that activate a phosphatidylinositol-calcium second messenger system (By similarity).</text>
</comment>
<comment type="subcellular location">
    <subcellularLocation>
        <location>Cell membrane</location>
        <topology>Multi-pass membrane protein</topology>
    </subcellularLocation>
</comment>
<comment type="similarity">
    <text evidence="3">Belongs to the G-protein coupled receptor 1 family.</text>
</comment>